<comment type="function">
    <text evidence="1">Catalyzes the NADPH-dependent reduction of 7-cyano-7-deazaguanine (preQ0) to 7-aminomethyl-7-deazaguanine (preQ1).</text>
</comment>
<comment type="catalytic activity">
    <reaction evidence="1">
        <text>7-aminomethyl-7-carbaguanine + 2 NADP(+) = 7-cyano-7-deazaguanine + 2 NADPH + 3 H(+)</text>
        <dbReference type="Rhea" id="RHEA:13409"/>
        <dbReference type="ChEBI" id="CHEBI:15378"/>
        <dbReference type="ChEBI" id="CHEBI:45075"/>
        <dbReference type="ChEBI" id="CHEBI:57783"/>
        <dbReference type="ChEBI" id="CHEBI:58349"/>
        <dbReference type="ChEBI" id="CHEBI:58703"/>
        <dbReference type="EC" id="1.7.1.13"/>
    </reaction>
</comment>
<comment type="pathway">
    <text evidence="1">tRNA modification; tRNA-queuosine biosynthesis.</text>
</comment>
<comment type="subunit">
    <text evidence="1">Homodimer.</text>
</comment>
<comment type="subcellular location">
    <subcellularLocation>
        <location evidence="1">Cytoplasm</location>
    </subcellularLocation>
</comment>
<comment type="similarity">
    <text evidence="1">Belongs to the GTP cyclohydrolase I family. QueF type 2 subfamily.</text>
</comment>
<accession>A7FFG0</accession>
<reference key="1">
    <citation type="journal article" date="2007" name="PLoS Genet.">
        <title>The complete genome sequence of Yersinia pseudotuberculosis IP31758, the causative agent of Far East scarlet-like fever.</title>
        <authorList>
            <person name="Eppinger M."/>
            <person name="Rosovitz M.J."/>
            <person name="Fricke W.F."/>
            <person name="Rasko D.A."/>
            <person name="Kokorina G."/>
            <person name="Fayolle C."/>
            <person name="Lindler L.E."/>
            <person name="Carniel E."/>
            <person name="Ravel J."/>
        </authorList>
    </citation>
    <scope>NUCLEOTIDE SEQUENCE [LARGE SCALE GENOMIC DNA]</scope>
    <source>
        <strain>IP 31758</strain>
    </source>
</reference>
<gene>
    <name evidence="1" type="primary">queF</name>
    <name type="ordered locus">YpsIP31758_1004</name>
</gene>
<protein>
    <recommendedName>
        <fullName evidence="1">NADPH-dependent 7-cyano-7-deazaguanine reductase</fullName>
        <ecNumber evidence="1">1.7.1.13</ecNumber>
    </recommendedName>
    <alternativeName>
        <fullName evidence="1">7-cyano-7-carbaguanine reductase</fullName>
    </alternativeName>
    <alternativeName>
        <fullName evidence="1">NADPH-dependent nitrile oxidoreductase</fullName>
    </alternativeName>
    <alternativeName>
        <fullName evidence="1">PreQ(0) reductase</fullName>
    </alternativeName>
</protein>
<name>QUEF_YERP3</name>
<feature type="chain" id="PRO_1000062369" description="NADPH-dependent 7-cyano-7-deazaguanine reductase">
    <location>
        <begin position="1"/>
        <end position="281"/>
    </location>
</feature>
<feature type="active site" description="Thioimide intermediate" evidence="1">
    <location>
        <position position="189"/>
    </location>
</feature>
<feature type="active site" description="Proton donor" evidence="1">
    <location>
        <position position="196"/>
    </location>
</feature>
<feature type="binding site" evidence="1">
    <location>
        <begin position="88"/>
        <end position="90"/>
    </location>
    <ligand>
        <name>substrate</name>
    </ligand>
</feature>
<feature type="binding site" evidence="1">
    <location>
        <begin position="90"/>
        <end position="91"/>
    </location>
    <ligand>
        <name>NADPH</name>
        <dbReference type="ChEBI" id="CHEBI:57783"/>
    </ligand>
</feature>
<feature type="binding site" evidence="1">
    <location>
        <begin position="228"/>
        <end position="229"/>
    </location>
    <ligand>
        <name>substrate</name>
    </ligand>
</feature>
<feature type="binding site" evidence="1">
    <location>
        <begin position="257"/>
        <end position="258"/>
    </location>
    <ligand>
        <name>NADPH</name>
        <dbReference type="ChEBI" id="CHEBI:57783"/>
    </ligand>
</feature>
<proteinExistence type="inferred from homology"/>
<keyword id="KW-0963">Cytoplasm</keyword>
<keyword id="KW-0521">NADP</keyword>
<keyword id="KW-0560">Oxidoreductase</keyword>
<keyword id="KW-0671">Queuosine biosynthesis</keyword>
<evidence type="ECO:0000255" key="1">
    <source>
        <dbReference type="HAMAP-Rule" id="MF_00817"/>
    </source>
</evidence>
<dbReference type="EC" id="1.7.1.13" evidence="1"/>
<dbReference type="EMBL" id="CP000720">
    <property type="protein sequence ID" value="ABS46195.1"/>
    <property type="molecule type" value="Genomic_DNA"/>
</dbReference>
<dbReference type="RefSeq" id="WP_011192866.1">
    <property type="nucleotide sequence ID" value="NC_009708.1"/>
</dbReference>
<dbReference type="SMR" id="A7FFG0"/>
<dbReference type="KEGG" id="ypi:YpsIP31758_1004"/>
<dbReference type="HOGENOM" id="CLU_054738_0_0_6"/>
<dbReference type="UniPathway" id="UPA00392"/>
<dbReference type="Proteomes" id="UP000002412">
    <property type="component" value="Chromosome"/>
</dbReference>
<dbReference type="GO" id="GO:0005737">
    <property type="term" value="C:cytoplasm"/>
    <property type="evidence" value="ECO:0007669"/>
    <property type="project" value="UniProtKB-SubCell"/>
</dbReference>
<dbReference type="GO" id="GO:0033739">
    <property type="term" value="F:preQ1 synthase activity"/>
    <property type="evidence" value="ECO:0007669"/>
    <property type="project" value="UniProtKB-UniRule"/>
</dbReference>
<dbReference type="GO" id="GO:0008616">
    <property type="term" value="P:queuosine biosynthetic process"/>
    <property type="evidence" value="ECO:0007669"/>
    <property type="project" value="UniProtKB-UniRule"/>
</dbReference>
<dbReference type="GO" id="GO:0006400">
    <property type="term" value="P:tRNA modification"/>
    <property type="evidence" value="ECO:0007669"/>
    <property type="project" value="UniProtKB-UniRule"/>
</dbReference>
<dbReference type="Gene3D" id="3.30.1130.10">
    <property type="match status" value="2"/>
</dbReference>
<dbReference type="HAMAP" id="MF_00817">
    <property type="entry name" value="QueF_type2"/>
    <property type="match status" value="1"/>
</dbReference>
<dbReference type="InterPro" id="IPR043133">
    <property type="entry name" value="GTP-CH-I_C/QueF"/>
</dbReference>
<dbReference type="InterPro" id="IPR050084">
    <property type="entry name" value="NADPH_dep_7-cyano-7-deazaG_red"/>
</dbReference>
<dbReference type="InterPro" id="IPR029500">
    <property type="entry name" value="QueF"/>
</dbReference>
<dbReference type="InterPro" id="IPR029139">
    <property type="entry name" value="QueF_N"/>
</dbReference>
<dbReference type="InterPro" id="IPR016428">
    <property type="entry name" value="QueF_type2"/>
</dbReference>
<dbReference type="NCBIfam" id="TIGR03138">
    <property type="entry name" value="QueF"/>
    <property type="match status" value="1"/>
</dbReference>
<dbReference type="PANTHER" id="PTHR34354">
    <property type="entry name" value="NADPH-DEPENDENT 7-CYANO-7-DEAZAGUANINE REDUCTASE"/>
    <property type="match status" value="1"/>
</dbReference>
<dbReference type="PANTHER" id="PTHR34354:SF1">
    <property type="entry name" value="NADPH-DEPENDENT 7-CYANO-7-DEAZAGUANINE REDUCTASE"/>
    <property type="match status" value="1"/>
</dbReference>
<dbReference type="Pfam" id="PF14489">
    <property type="entry name" value="QueF"/>
    <property type="match status" value="1"/>
</dbReference>
<dbReference type="Pfam" id="PF14819">
    <property type="entry name" value="QueF_N"/>
    <property type="match status" value="1"/>
</dbReference>
<dbReference type="PIRSF" id="PIRSF004750">
    <property type="entry name" value="Nitrile_oxidored_YqcD_prd"/>
    <property type="match status" value="1"/>
</dbReference>
<dbReference type="SUPFAM" id="SSF55620">
    <property type="entry name" value="Tetrahydrobiopterin biosynthesis enzymes-like"/>
    <property type="match status" value="1"/>
</dbReference>
<sequence>MSSYQNHKALAELTLGKPTAYCDHYDATLLQAVPRSMNREPLGLYPDNLPFHGADIWTLYELSWLNSNGLPQVAVGEISLNADSINLIESKSFKLYLNSFNQTIFADKESVRMTLQRDLAACAQGNVSVALYDLDEITGQPISNFNGECLDKQDIRIDSYEFNADYLQGAAGKDHVEESLVSHLLKSNCLITHQPDWGSVQIHYRGPQIDHEALLRYLVSFRHHNEFHEQCVERIFNDIMRFCQPETLTVYARYTRRGGLDINPWRSNTDFVPLTGRLARQ</sequence>
<organism>
    <name type="scientific">Yersinia pseudotuberculosis serotype O:1b (strain IP 31758)</name>
    <dbReference type="NCBI Taxonomy" id="349747"/>
    <lineage>
        <taxon>Bacteria</taxon>
        <taxon>Pseudomonadati</taxon>
        <taxon>Pseudomonadota</taxon>
        <taxon>Gammaproteobacteria</taxon>
        <taxon>Enterobacterales</taxon>
        <taxon>Yersiniaceae</taxon>
        <taxon>Yersinia</taxon>
    </lineage>
</organism>